<proteinExistence type="evidence at transcript level"/>
<comment type="function">
    <text evidence="1">Probable carboxypeptidase.</text>
</comment>
<comment type="subcellular location">
    <subcellularLocation>
        <location evidence="4">Secreted</location>
    </subcellularLocation>
</comment>
<comment type="tissue specificity">
    <text evidence="3">Expressed in seedlings and siliques.</text>
</comment>
<comment type="similarity">
    <text evidence="4">Belongs to the peptidase S10 family.</text>
</comment>
<comment type="sequence caution" evidence="4">
    <conflict type="erroneous gene model prediction">
        <sequence resource="EMBL-CDS" id="BAB03129"/>
    </conflict>
</comment>
<dbReference type="EC" id="3.4.16.-"/>
<dbReference type="EMBL" id="AC069472">
    <property type="protein sequence ID" value="AAG51061.1"/>
    <property type="molecule type" value="Genomic_DNA"/>
</dbReference>
<dbReference type="EMBL" id="AP002047">
    <property type="protein sequence ID" value="BAB03129.1"/>
    <property type="status" value="ALT_SEQ"/>
    <property type="molecule type" value="Genomic_DNA"/>
</dbReference>
<dbReference type="EMBL" id="CP002686">
    <property type="protein sequence ID" value="AEE75166.1"/>
    <property type="molecule type" value="Genomic_DNA"/>
</dbReference>
<dbReference type="EMBL" id="BT012565">
    <property type="protein sequence ID" value="AAS99709.1"/>
    <property type="molecule type" value="mRNA"/>
</dbReference>
<dbReference type="RefSeq" id="NP_187828.1">
    <property type="nucleotide sequence ID" value="NM_112056.3"/>
</dbReference>
<dbReference type="SMR" id="Q9C7D6"/>
<dbReference type="FunCoup" id="Q9C7D6">
    <property type="interactions" value="571"/>
</dbReference>
<dbReference type="STRING" id="3702.Q9C7D6"/>
<dbReference type="ESTHER" id="arath-SCP17">
    <property type="family name" value="Carboxypeptidase_S10"/>
</dbReference>
<dbReference type="MEROPS" id="S10.A19"/>
<dbReference type="GlyCosmos" id="Q9C7D6">
    <property type="glycosylation" value="2 sites, No reported glycans"/>
</dbReference>
<dbReference type="GlyGen" id="Q9C7D6">
    <property type="glycosylation" value="2 sites"/>
</dbReference>
<dbReference type="PaxDb" id="3702-AT3G12203.1"/>
<dbReference type="EnsemblPlants" id="AT3G12203.1">
    <property type="protein sequence ID" value="AT3G12203.1"/>
    <property type="gene ID" value="AT3G12203"/>
</dbReference>
<dbReference type="GeneID" id="820399"/>
<dbReference type="Gramene" id="AT3G12203.1">
    <property type="protein sequence ID" value="AT3G12203.1"/>
    <property type="gene ID" value="AT3G12203"/>
</dbReference>
<dbReference type="KEGG" id="ath:AT3G12203"/>
<dbReference type="Araport" id="AT3G12203"/>
<dbReference type="TAIR" id="AT3G12203">
    <property type="gene designation" value="SCPL17"/>
</dbReference>
<dbReference type="eggNOG" id="KOG1282">
    <property type="taxonomic scope" value="Eukaryota"/>
</dbReference>
<dbReference type="HOGENOM" id="CLU_008523_0_1_1"/>
<dbReference type="InParanoid" id="Q9C7D6"/>
<dbReference type="PhylomeDB" id="Q9C7D6"/>
<dbReference type="BioCyc" id="ARA:AT3G12203-MONOMER"/>
<dbReference type="PRO" id="PR:Q9C7D6"/>
<dbReference type="Proteomes" id="UP000006548">
    <property type="component" value="Chromosome 3"/>
</dbReference>
<dbReference type="ExpressionAtlas" id="Q9C7D6">
    <property type="expression patterns" value="baseline and differential"/>
</dbReference>
<dbReference type="GO" id="GO:0005576">
    <property type="term" value="C:extracellular region"/>
    <property type="evidence" value="ECO:0007669"/>
    <property type="project" value="UniProtKB-SubCell"/>
</dbReference>
<dbReference type="GO" id="GO:0004185">
    <property type="term" value="F:serine-type carboxypeptidase activity"/>
    <property type="evidence" value="ECO:0007669"/>
    <property type="project" value="InterPro"/>
</dbReference>
<dbReference type="GO" id="GO:0006508">
    <property type="term" value="P:proteolysis"/>
    <property type="evidence" value="ECO:0007669"/>
    <property type="project" value="UniProtKB-KW"/>
</dbReference>
<dbReference type="FunFam" id="3.40.50.12670:FF:000001">
    <property type="entry name" value="Carboxypeptidase"/>
    <property type="match status" value="1"/>
</dbReference>
<dbReference type="FunFam" id="3.40.50.1820:FF:000148">
    <property type="entry name" value="Serine carboxypeptidase-like 11"/>
    <property type="match status" value="1"/>
</dbReference>
<dbReference type="Gene3D" id="3.40.50.12670">
    <property type="match status" value="1"/>
</dbReference>
<dbReference type="Gene3D" id="3.40.50.1820">
    <property type="entry name" value="alpha/beta hydrolase"/>
    <property type="match status" value="1"/>
</dbReference>
<dbReference type="InterPro" id="IPR029058">
    <property type="entry name" value="AB_hydrolase_fold"/>
</dbReference>
<dbReference type="InterPro" id="IPR001563">
    <property type="entry name" value="Peptidase_S10"/>
</dbReference>
<dbReference type="PANTHER" id="PTHR11802:SF316">
    <property type="entry name" value="SERINE CARBOXYPEPTIDASE-LIKE 14-RELATED"/>
    <property type="match status" value="1"/>
</dbReference>
<dbReference type="PANTHER" id="PTHR11802">
    <property type="entry name" value="SERINE PROTEASE FAMILY S10 SERINE CARBOXYPEPTIDASE"/>
    <property type="match status" value="1"/>
</dbReference>
<dbReference type="Pfam" id="PF00450">
    <property type="entry name" value="Peptidase_S10"/>
    <property type="match status" value="1"/>
</dbReference>
<dbReference type="PRINTS" id="PR00724">
    <property type="entry name" value="CRBOXYPTASEC"/>
</dbReference>
<dbReference type="SUPFAM" id="SSF53474">
    <property type="entry name" value="alpha/beta-Hydrolases"/>
    <property type="match status" value="1"/>
</dbReference>
<sequence length="437" mass="49505">MGKECYYLSWILKFHLLLVLIQLVDSGSTIRFLPGFQGPLPFELETGYIGVGEAEKDQMFYYFIKSESNPEKDPLLLWLSGGPFCSSFTALIYENGPIAFKAEEYNGSIPSLVSTTYAWTKVASILYLDQPVGTGFSYSRNPLADIPSDTGVAKPVNEFLHKWLDKHPEFLSNPLYVAGNSYSGIVIPTIVQEISNGNHLDSKPQINLQGFVLGNPATDTDIDLNSRIPFAHGKALISDEHYESLKRSCQGNYISVNPRNTKCLKLLEDFKKCVSGISEEYILKPDCMWLYSCMANLHSLSEYWANEKSVRKALLVNEGTVRKWIRCNTEIAYNKDIRSSVPYHKYISIEGYRSLVFSGDHDMLVPFLGTQAWIRSLNYSIVDDWRPWMVQNQVAGYTRTYANKMTFATVKGGGHTSEYKPVETYIMIKRWLSGQPL</sequence>
<feature type="signal peptide" evidence="2">
    <location>
        <begin position="1"/>
        <end position="26"/>
    </location>
</feature>
<feature type="chain" id="PRO_0000274631" description="Serine carboxypeptidase-like 17">
    <location>
        <begin position="27"/>
        <end position="437"/>
    </location>
</feature>
<feature type="active site" evidence="1">
    <location>
        <position position="181"/>
    </location>
</feature>
<feature type="active site" evidence="1">
    <location>
        <position position="362"/>
    </location>
</feature>
<feature type="active site" evidence="1">
    <location>
        <position position="415"/>
    </location>
</feature>
<feature type="glycosylation site" description="N-linked (GlcNAc...) asparagine" evidence="2">
    <location>
        <position position="106"/>
    </location>
</feature>
<feature type="glycosylation site" description="N-linked (GlcNAc...) asparagine" evidence="2">
    <location>
        <position position="378"/>
    </location>
</feature>
<feature type="disulfide bond" evidence="1">
    <location>
        <begin position="85"/>
        <end position="327"/>
    </location>
</feature>
<feature type="disulfide bond" evidence="1">
    <location>
        <begin position="249"/>
        <end position="263"/>
    </location>
</feature>
<feature type="disulfide bond" evidence="1">
    <location>
        <begin position="287"/>
        <end position="293"/>
    </location>
</feature>
<gene>
    <name type="primary">SCPL17</name>
    <name type="ordered locus">At3g12203</name>
    <name type="ORF">F28J15.16</name>
</gene>
<name>SCP17_ARATH</name>
<evidence type="ECO:0000250" key="1"/>
<evidence type="ECO:0000255" key="2"/>
<evidence type="ECO:0000269" key="3">
    <source>
    </source>
</evidence>
<evidence type="ECO:0000305" key="4"/>
<accession>Q9C7D6</accession>
<accession>Q9LHI6</accession>
<organism>
    <name type="scientific">Arabidopsis thaliana</name>
    <name type="common">Mouse-ear cress</name>
    <dbReference type="NCBI Taxonomy" id="3702"/>
    <lineage>
        <taxon>Eukaryota</taxon>
        <taxon>Viridiplantae</taxon>
        <taxon>Streptophyta</taxon>
        <taxon>Embryophyta</taxon>
        <taxon>Tracheophyta</taxon>
        <taxon>Spermatophyta</taxon>
        <taxon>Magnoliopsida</taxon>
        <taxon>eudicotyledons</taxon>
        <taxon>Gunneridae</taxon>
        <taxon>Pentapetalae</taxon>
        <taxon>rosids</taxon>
        <taxon>malvids</taxon>
        <taxon>Brassicales</taxon>
        <taxon>Brassicaceae</taxon>
        <taxon>Camelineae</taxon>
        <taxon>Arabidopsis</taxon>
    </lineage>
</organism>
<protein>
    <recommendedName>
        <fullName>Serine carboxypeptidase-like 17</fullName>
        <ecNumber>3.4.16.-</ecNumber>
    </recommendedName>
</protein>
<keyword id="KW-0121">Carboxypeptidase</keyword>
<keyword id="KW-1015">Disulfide bond</keyword>
<keyword id="KW-0325">Glycoprotein</keyword>
<keyword id="KW-0378">Hydrolase</keyword>
<keyword id="KW-0645">Protease</keyword>
<keyword id="KW-1185">Reference proteome</keyword>
<keyword id="KW-0964">Secreted</keyword>
<keyword id="KW-0732">Signal</keyword>
<reference key="1">
    <citation type="journal article" date="2000" name="Nature">
        <title>Sequence and analysis of chromosome 3 of the plant Arabidopsis thaliana.</title>
        <authorList>
            <person name="Salanoubat M."/>
            <person name="Lemcke K."/>
            <person name="Rieger M."/>
            <person name="Ansorge W."/>
            <person name="Unseld M."/>
            <person name="Fartmann B."/>
            <person name="Valle G."/>
            <person name="Bloecker H."/>
            <person name="Perez-Alonso M."/>
            <person name="Obermaier B."/>
            <person name="Delseny M."/>
            <person name="Boutry M."/>
            <person name="Grivell L.A."/>
            <person name="Mache R."/>
            <person name="Puigdomenech P."/>
            <person name="De Simone V."/>
            <person name="Choisne N."/>
            <person name="Artiguenave F."/>
            <person name="Robert C."/>
            <person name="Brottier P."/>
            <person name="Wincker P."/>
            <person name="Cattolico L."/>
            <person name="Weissenbach J."/>
            <person name="Saurin W."/>
            <person name="Quetier F."/>
            <person name="Schaefer M."/>
            <person name="Mueller-Auer S."/>
            <person name="Gabel C."/>
            <person name="Fuchs M."/>
            <person name="Benes V."/>
            <person name="Wurmbach E."/>
            <person name="Drzonek H."/>
            <person name="Erfle H."/>
            <person name="Jordan N."/>
            <person name="Bangert S."/>
            <person name="Wiedelmann R."/>
            <person name="Kranz H."/>
            <person name="Voss H."/>
            <person name="Holland R."/>
            <person name="Brandt P."/>
            <person name="Nyakatura G."/>
            <person name="Vezzi A."/>
            <person name="D'Angelo M."/>
            <person name="Pallavicini A."/>
            <person name="Toppo S."/>
            <person name="Simionati B."/>
            <person name="Conrad A."/>
            <person name="Hornischer K."/>
            <person name="Kauer G."/>
            <person name="Loehnert T.-H."/>
            <person name="Nordsiek G."/>
            <person name="Reichelt J."/>
            <person name="Scharfe M."/>
            <person name="Schoen O."/>
            <person name="Bargues M."/>
            <person name="Terol J."/>
            <person name="Climent J."/>
            <person name="Navarro P."/>
            <person name="Collado C."/>
            <person name="Perez-Perez A."/>
            <person name="Ottenwaelder B."/>
            <person name="Duchemin D."/>
            <person name="Cooke R."/>
            <person name="Laudie M."/>
            <person name="Berger-Llauro C."/>
            <person name="Purnelle B."/>
            <person name="Masuy D."/>
            <person name="de Haan M."/>
            <person name="Maarse A.C."/>
            <person name="Alcaraz J.-P."/>
            <person name="Cottet A."/>
            <person name="Casacuberta E."/>
            <person name="Monfort A."/>
            <person name="Argiriou A."/>
            <person name="Flores M."/>
            <person name="Liguori R."/>
            <person name="Vitale D."/>
            <person name="Mannhaupt G."/>
            <person name="Haase D."/>
            <person name="Schoof H."/>
            <person name="Rudd S."/>
            <person name="Zaccaria P."/>
            <person name="Mewes H.-W."/>
            <person name="Mayer K.F.X."/>
            <person name="Kaul S."/>
            <person name="Town C.D."/>
            <person name="Koo H.L."/>
            <person name="Tallon L.J."/>
            <person name="Jenkins J."/>
            <person name="Rooney T."/>
            <person name="Rizzo M."/>
            <person name="Walts A."/>
            <person name="Utterback T."/>
            <person name="Fujii C.Y."/>
            <person name="Shea T.P."/>
            <person name="Creasy T.H."/>
            <person name="Haas B."/>
            <person name="Maiti R."/>
            <person name="Wu D."/>
            <person name="Peterson J."/>
            <person name="Van Aken S."/>
            <person name="Pai G."/>
            <person name="Militscher J."/>
            <person name="Sellers P."/>
            <person name="Gill J.E."/>
            <person name="Feldblyum T.V."/>
            <person name="Preuss D."/>
            <person name="Lin X."/>
            <person name="Nierman W.C."/>
            <person name="Salzberg S.L."/>
            <person name="White O."/>
            <person name="Venter J.C."/>
            <person name="Fraser C.M."/>
            <person name="Kaneko T."/>
            <person name="Nakamura Y."/>
            <person name="Sato S."/>
            <person name="Kato T."/>
            <person name="Asamizu E."/>
            <person name="Sasamoto S."/>
            <person name="Kimura T."/>
            <person name="Idesawa K."/>
            <person name="Kawashima K."/>
            <person name="Kishida Y."/>
            <person name="Kiyokawa C."/>
            <person name="Kohara M."/>
            <person name="Matsumoto M."/>
            <person name="Matsuno A."/>
            <person name="Muraki A."/>
            <person name="Nakayama S."/>
            <person name="Nakazaki N."/>
            <person name="Shinpo S."/>
            <person name="Takeuchi C."/>
            <person name="Wada T."/>
            <person name="Watanabe A."/>
            <person name="Yamada M."/>
            <person name="Yasuda M."/>
            <person name="Tabata S."/>
        </authorList>
    </citation>
    <scope>NUCLEOTIDE SEQUENCE [LARGE SCALE GENOMIC DNA]</scope>
    <source>
        <strain>cv. Columbia</strain>
    </source>
</reference>
<reference key="2">
    <citation type="journal article" date="2000" name="DNA Res.">
        <title>Structural analysis of Arabidopsis thaliana chromosome 3. II. Sequence features of the 4,251,695 bp regions covered by 90 P1, TAC and BAC clones.</title>
        <authorList>
            <person name="Kaneko T."/>
            <person name="Katoh T."/>
            <person name="Sato S."/>
            <person name="Nakamura Y."/>
            <person name="Asamizu E."/>
            <person name="Tabata S."/>
        </authorList>
    </citation>
    <scope>NUCLEOTIDE SEQUENCE [LARGE SCALE GENOMIC DNA]</scope>
    <source>
        <strain>cv. Columbia</strain>
    </source>
</reference>
<reference key="3">
    <citation type="journal article" date="2017" name="Plant J.">
        <title>Araport11: a complete reannotation of the Arabidopsis thaliana reference genome.</title>
        <authorList>
            <person name="Cheng C.Y."/>
            <person name="Krishnakumar V."/>
            <person name="Chan A.P."/>
            <person name="Thibaud-Nissen F."/>
            <person name="Schobel S."/>
            <person name="Town C.D."/>
        </authorList>
    </citation>
    <scope>GENOME REANNOTATION</scope>
    <source>
        <strain>cv. Columbia</strain>
    </source>
</reference>
<reference key="4">
    <citation type="submission" date="2004-04" db="EMBL/GenBank/DDBJ databases">
        <authorList>
            <person name="Kim C.J."/>
            <person name="Chen H."/>
            <person name="Cheuk R.F."/>
            <person name="Shinn P."/>
            <person name="Carninci P."/>
            <person name="Hayashizaki Y."/>
            <person name="Ishida J."/>
            <person name="Kamiya A."/>
            <person name="Kawai J."/>
            <person name="Narusaka M."/>
            <person name="Sakurai T."/>
            <person name="Satou M."/>
            <person name="Seki M."/>
            <person name="Shinozaki K."/>
            <person name="Ecker J.R."/>
        </authorList>
    </citation>
    <scope>NUCLEOTIDE SEQUENCE [LARGE SCALE MRNA]</scope>
    <source>
        <strain>cv. Columbia</strain>
    </source>
</reference>
<reference key="5">
    <citation type="journal article" date="2005" name="Plant Physiol.">
        <title>An expression and bioinformatics analysis of the Arabidopsis serine carboxypeptidase-like gene family.</title>
        <authorList>
            <person name="Fraser C.M."/>
            <person name="Rider L.W."/>
            <person name="Chapple C."/>
        </authorList>
    </citation>
    <scope>GENE FAMILY</scope>
    <scope>TISSUE SPECIFICITY</scope>
    <scope>NOMENCLATURE</scope>
</reference>